<protein>
    <recommendedName>
        <fullName evidence="1">Large ribosomal subunit protein uL1</fullName>
    </recommendedName>
    <alternativeName>
        <fullName evidence="2">50S ribosomal protein L1</fullName>
    </alternativeName>
</protein>
<proteinExistence type="inferred from homology"/>
<accession>A4IJH7</accession>
<keyword id="KW-0678">Repressor</keyword>
<keyword id="KW-0687">Ribonucleoprotein</keyword>
<keyword id="KW-0689">Ribosomal protein</keyword>
<keyword id="KW-0694">RNA-binding</keyword>
<keyword id="KW-0699">rRNA-binding</keyword>
<keyword id="KW-0810">Translation regulation</keyword>
<keyword id="KW-0820">tRNA-binding</keyword>
<evidence type="ECO:0000255" key="1">
    <source>
        <dbReference type="HAMAP-Rule" id="MF_01318"/>
    </source>
</evidence>
<evidence type="ECO:0000305" key="2"/>
<sequence length="233" mass="25090">MPKRGKKYLEALKLVDRFKAYPVAEAIELVKKTNVAKFDATVEVAFRLGVDPKKADQQIRGAVVLPHGTGKVARVLVFAKGEKAKEAEAAGADYVGDTEYINKIQQGWFDFDVVVATPDMMGEVGKLGRILGPKGLMPNPKTGTVTFDVTKAVQEIKAGKVEYRVDKAGNIHVPIGKVSFDNEKLAENFATIYEAILKAKPAAAKGTYVKNVTITSTMGPGIKVDPTTVAVAQ</sequence>
<comment type="function">
    <text evidence="1">Binds directly to 23S rRNA. The L1 stalk is quite mobile in the ribosome, and is involved in E site tRNA release.</text>
</comment>
<comment type="function">
    <text evidence="1">Protein L1 is also a translational repressor protein, it controls the translation of the L11 operon by binding to its mRNA.</text>
</comment>
<comment type="subunit">
    <text evidence="1">Part of the 50S ribosomal subunit.</text>
</comment>
<comment type="similarity">
    <text evidence="1">Belongs to the universal ribosomal protein uL1 family.</text>
</comment>
<feature type="chain" id="PRO_0000308013" description="Large ribosomal subunit protein uL1">
    <location>
        <begin position="1"/>
        <end position="233"/>
    </location>
</feature>
<organism>
    <name type="scientific">Geobacillus thermodenitrificans (strain NG80-2)</name>
    <dbReference type="NCBI Taxonomy" id="420246"/>
    <lineage>
        <taxon>Bacteria</taxon>
        <taxon>Bacillati</taxon>
        <taxon>Bacillota</taxon>
        <taxon>Bacilli</taxon>
        <taxon>Bacillales</taxon>
        <taxon>Anoxybacillaceae</taxon>
        <taxon>Geobacillus</taxon>
    </lineage>
</organism>
<reference key="1">
    <citation type="journal article" date="2007" name="Proc. Natl. Acad. Sci. U.S.A.">
        <title>Genome and proteome of long-chain alkane degrading Geobacillus thermodenitrificans NG80-2 isolated from a deep-subsurface oil reservoir.</title>
        <authorList>
            <person name="Feng L."/>
            <person name="Wang W."/>
            <person name="Cheng J."/>
            <person name="Ren Y."/>
            <person name="Zhao G."/>
            <person name="Gao C."/>
            <person name="Tang Y."/>
            <person name="Liu X."/>
            <person name="Han W."/>
            <person name="Peng X."/>
            <person name="Liu R."/>
            <person name="Wang L."/>
        </authorList>
    </citation>
    <scope>NUCLEOTIDE SEQUENCE [LARGE SCALE GENOMIC DNA]</scope>
    <source>
        <strain>NG80-2</strain>
    </source>
</reference>
<dbReference type="EMBL" id="CP000557">
    <property type="protein sequence ID" value="ABO65481.1"/>
    <property type="molecule type" value="Genomic_DNA"/>
</dbReference>
<dbReference type="RefSeq" id="WP_011886627.1">
    <property type="nucleotide sequence ID" value="NC_009328.1"/>
</dbReference>
<dbReference type="SMR" id="A4IJH7"/>
<dbReference type="GeneID" id="87622338"/>
<dbReference type="KEGG" id="gtn:GTNG_0094"/>
<dbReference type="eggNOG" id="COG0081">
    <property type="taxonomic scope" value="Bacteria"/>
</dbReference>
<dbReference type="HOGENOM" id="CLU_062853_0_0_9"/>
<dbReference type="Proteomes" id="UP000001578">
    <property type="component" value="Chromosome"/>
</dbReference>
<dbReference type="GO" id="GO:0015934">
    <property type="term" value="C:large ribosomal subunit"/>
    <property type="evidence" value="ECO:0007669"/>
    <property type="project" value="InterPro"/>
</dbReference>
<dbReference type="GO" id="GO:0019843">
    <property type="term" value="F:rRNA binding"/>
    <property type="evidence" value="ECO:0007669"/>
    <property type="project" value="UniProtKB-UniRule"/>
</dbReference>
<dbReference type="GO" id="GO:0003735">
    <property type="term" value="F:structural constituent of ribosome"/>
    <property type="evidence" value="ECO:0007669"/>
    <property type="project" value="InterPro"/>
</dbReference>
<dbReference type="GO" id="GO:0000049">
    <property type="term" value="F:tRNA binding"/>
    <property type="evidence" value="ECO:0007669"/>
    <property type="project" value="UniProtKB-KW"/>
</dbReference>
<dbReference type="GO" id="GO:0006417">
    <property type="term" value="P:regulation of translation"/>
    <property type="evidence" value="ECO:0007669"/>
    <property type="project" value="UniProtKB-KW"/>
</dbReference>
<dbReference type="GO" id="GO:0006412">
    <property type="term" value="P:translation"/>
    <property type="evidence" value="ECO:0007669"/>
    <property type="project" value="UniProtKB-UniRule"/>
</dbReference>
<dbReference type="CDD" id="cd00403">
    <property type="entry name" value="Ribosomal_L1"/>
    <property type="match status" value="1"/>
</dbReference>
<dbReference type="FunFam" id="3.40.50.790:FF:000001">
    <property type="entry name" value="50S ribosomal protein L1"/>
    <property type="match status" value="1"/>
</dbReference>
<dbReference type="Gene3D" id="3.30.190.20">
    <property type="match status" value="1"/>
</dbReference>
<dbReference type="Gene3D" id="3.40.50.790">
    <property type="match status" value="1"/>
</dbReference>
<dbReference type="HAMAP" id="MF_01318_B">
    <property type="entry name" value="Ribosomal_uL1_B"/>
    <property type="match status" value="1"/>
</dbReference>
<dbReference type="InterPro" id="IPR005878">
    <property type="entry name" value="Ribosom_uL1_bac-type"/>
</dbReference>
<dbReference type="InterPro" id="IPR002143">
    <property type="entry name" value="Ribosomal_uL1"/>
</dbReference>
<dbReference type="InterPro" id="IPR023674">
    <property type="entry name" value="Ribosomal_uL1-like"/>
</dbReference>
<dbReference type="InterPro" id="IPR028364">
    <property type="entry name" value="Ribosomal_uL1/biogenesis"/>
</dbReference>
<dbReference type="InterPro" id="IPR016095">
    <property type="entry name" value="Ribosomal_uL1_3-a/b-sand"/>
</dbReference>
<dbReference type="InterPro" id="IPR023673">
    <property type="entry name" value="Ribosomal_uL1_CS"/>
</dbReference>
<dbReference type="NCBIfam" id="TIGR01169">
    <property type="entry name" value="rplA_bact"/>
    <property type="match status" value="1"/>
</dbReference>
<dbReference type="PANTHER" id="PTHR36427">
    <property type="entry name" value="54S RIBOSOMAL PROTEIN L1, MITOCHONDRIAL"/>
    <property type="match status" value="1"/>
</dbReference>
<dbReference type="PANTHER" id="PTHR36427:SF3">
    <property type="entry name" value="LARGE RIBOSOMAL SUBUNIT PROTEIN UL1M"/>
    <property type="match status" value="1"/>
</dbReference>
<dbReference type="Pfam" id="PF00687">
    <property type="entry name" value="Ribosomal_L1"/>
    <property type="match status" value="1"/>
</dbReference>
<dbReference type="PIRSF" id="PIRSF002155">
    <property type="entry name" value="Ribosomal_L1"/>
    <property type="match status" value="1"/>
</dbReference>
<dbReference type="SUPFAM" id="SSF56808">
    <property type="entry name" value="Ribosomal protein L1"/>
    <property type="match status" value="1"/>
</dbReference>
<dbReference type="PROSITE" id="PS01199">
    <property type="entry name" value="RIBOSOMAL_L1"/>
    <property type="match status" value="1"/>
</dbReference>
<name>RL1_GEOTN</name>
<gene>
    <name evidence="1" type="primary">rplA</name>
    <name type="ordered locus">GTNG_0094</name>
</gene>